<protein>
    <recommendedName>
        <fullName evidence="11">Autotransporter adhesin AIDA-I</fullName>
    </recommendedName>
    <alternativeName>
        <fullName evidence="9">Adhesin involved in diffuse adherence</fullName>
        <shortName evidence="9">AIDA</shortName>
    </alternativeName>
    <component>
        <recommendedName>
            <fullName evidence="9">Adhesin AIDA-I</fullName>
        </recommendedName>
    </component>
    <component>
        <recommendedName>
            <fullName evidence="10">AIDA-I translocator</fullName>
        </recommendedName>
        <alternativeName>
            <fullName evidence="10">AIDAc</fullName>
        </alternativeName>
    </component>
</protein>
<comment type="function">
    <text evidence="2 5 7">Potent bacterial adhesin that mediates bacterial attachment to a broad variety of human and other mammalian cells (PubMed:17951390, PubMed:25211077). Has additional virulence properties, as it is capable of mediating bacterial autoaggregation via intercellular self-recognition and it is a highly efficient initiator of biofilm formation (PubMed:15547278, PubMed:17951390).</text>
</comment>
<comment type="subunit">
    <text>Intercellular AIDA-AIDA interaction is responsible for bacterial autoaggregation. AIDA can also interact with antigen 43 (Ag43), and the resultant intercellular AIDA-Ag43 interaction causes cell aggregation.</text>
</comment>
<comment type="subcellular location">
    <molecule>Autotransporter adhesin AIDA-I</molecule>
    <subcellularLocation>
        <location>Periplasm</location>
    </subcellularLocation>
</comment>
<comment type="subcellular location">
    <molecule>Adhesin AIDA-I</molecule>
    <subcellularLocation>
        <location>Secreted</location>
    </subcellularLocation>
    <subcellularLocation>
        <location evidence="4">Cell surface</location>
    </subcellularLocation>
    <text evidence="4">The N-terminal passenger domain containing the adhesin moiety gains access to the surface. Localized as a tightly restricted cap on a single cell pole in cell with a complete lipopolysaccharide (PubMed:16788193).</text>
</comment>
<comment type="subcellular location">
    <molecule>AIDA-I translocator</molecule>
    <subcellularLocation>
        <location evidence="6 7 8">Cell outer membrane</location>
        <topology evidence="11">Multi-pass membrane protein</topology>
    </subcellularLocation>
    <text evidence="8">The cleaved AIDAc containing the translocator domain is localized in the outer membrane.</text>
</comment>
<comment type="domain">
    <text evidence="5 6 8">The signal peptide, cleaved at the inner membrane, guides the polyprotein to the periplasmic space (PubMed:17951390, PubMed:19398552, PubMed:8899706). Then, insertion of the C-terminal translocator domain (or beta-domain) in the outer membrane forms a hydrophilic pore for the translocation of the passenger domain to the bacterial cell surface, with subsequent autocatalytic cleavage (PubMed:19398552, PubMed:8899706). Finally, the mature AIDA protein remains in contact with the cell surface via non-covalent interactions with the translocator pore (PubMed:8899706).</text>
</comment>
<comment type="PTM">
    <text evidence="2 5 7">Glycosylated on serine residues by AHH and AAH2 in the cytoplasm (PubMed:17951390, PubMed:25211077). Glycosylated with an average of 19 heptose residues (PubMed:15547278, PubMed:17951390). Glycosylated with either ADP-L, D-heptose or ADP-D, D-heptose (PubMed:25211077). Glycosylation is required for protein folding/stabilization and resistance to protease-mediated degradation (PubMed:17951390). Glycosylation is required for bacteria adhesion to mammalian cells (PubMed:15547278, PubMed:17951390, PubMed:25211077). Glycosylation is dispensable for cell outer membrane localization (PubMed:25211077). Glycosylation is dispensable for AIDA-mediated cell-cell aggregation and induction of biofilm formation (PubMed:15547278, PubMed:17951390). Glycosylation is dispensable for interaction with Ag43 (PubMed:15547278).</text>
</comment>
<comment type="disruption phenotype">
    <text evidence="7">Loss of bacteria adhesion to human HeLa cells.</text>
</comment>
<gene>
    <name type="primary">aidA</name>
    <name evidence="9" type="synonym">aidA-I</name>
</gene>
<feature type="signal peptide" evidence="3">
    <location>
        <begin position="1"/>
        <end position="49"/>
    </location>
</feature>
<feature type="chain" id="PRO_0000387573" description="Autotransporter adhesin AIDA-I">
    <location>
        <begin position="50"/>
        <end position="1286"/>
    </location>
</feature>
<feature type="chain" id="PRO_0000002698" description="Adhesin AIDA-I">
    <location>
        <begin position="50"/>
        <end position="846"/>
    </location>
</feature>
<feature type="chain" id="PRO_0000002699" description="AIDA-I translocator">
    <location>
        <begin position="847"/>
        <end position="1286"/>
    </location>
</feature>
<feature type="transmembrane region" description="Beta stranded" evidence="13 15">
    <location>
        <begin position="1006"/>
        <end position="1012"/>
    </location>
</feature>
<feature type="topological domain" description="Extracellular" evidence="13 15">
    <location>
        <begin position="1013"/>
        <end position="1029"/>
    </location>
</feature>
<feature type="transmembrane region" description="Beta stranded" evidence="13 15">
    <location>
        <begin position="1030"/>
        <end position="1040"/>
    </location>
</feature>
<feature type="topological domain" description="Periplasmic" evidence="13 15">
    <location>
        <begin position="1041"/>
        <end position="1047"/>
    </location>
</feature>
<feature type="transmembrane region" description="Beta stranded" evidence="13 15">
    <location>
        <begin position="1048"/>
        <end position="1058"/>
    </location>
</feature>
<feature type="topological domain" description="Extracellular" evidence="13 15">
    <location>
        <begin position="1059"/>
        <end position="1079"/>
    </location>
</feature>
<feature type="transmembrane region" description="Beta stranded" evidence="13 15">
    <location>
        <begin position="1080"/>
        <end position="1087"/>
    </location>
</feature>
<feature type="topological domain" description="Periplasmic" evidence="13 15">
    <location>
        <begin position="1088"/>
        <end position="1097"/>
    </location>
</feature>
<feature type="transmembrane region" description="Beta stranded" evidence="13 15">
    <location>
        <begin position="1098"/>
        <end position="1108"/>
    </location>
</feature>
<feature type="topological domain" description="Extracellular" evidence="13 15">
    <location>
        <begin position="1109"/>
        <end position="1126"/>
    </location>
</feature>
<feature type="transmembrane region" description="Beta stranded" evidence="13 15">
    <location>
        <begin position="1127"/>
        <end position="1138"/>
    </location>
</feature>
<feature type="topological domain" description="Periplasmic" evidence="13 15">
    <location>
        <begin position="1139"/>
        <end position="1152"/>
    </location>
</feature>
<feature type="transmembrane region" description="Beta stranded" evidence="13 15">
    <location>
        <begin position="1153"/>
        <end position="1164"/>
    </location>
</feature>
<feature type="topological domain" description="Extracellular" evidence="13 15">
    <location>
        <begin position="1165"/>
        <end position="1186"/>
    </location>
</feature>
<feature type="transmembrane region" description="Beta stranded" evidence="13 15">
    <location>
        <begin position="1187"/>
        <end position="1198"/>
    </location>
</feature>
<feature type="topological domain" description="Periplasmic" evidence="13 15">
    <location>
        <begin position="1199"/>
        <end position="1210"/>
    </location>
</feature>
<feature type="transmembrane region" description="Beta stranded" evidence="13 15">
    <location>
        <begin position="1211"/>
        <end position="1221"/>
    </location>
</feature>
<feature type="topological domain" description="Extracellular" evidence="13 15">
    <location>
        <begin position="1222"/>
        <end position="1242"/>
    </location>
</feature>
<feature type="transmembrane region" description="Beta stranded" evidence="13 15">
    <location>
        <begin position="1243"/>
        <end position="1253"/>
    </location>
</feature>
<feature type="topological domain" description="Periplasmic" evidence="13 15">
    <location>
        <begin position="1254"/>
        <end position="1259"/>
    </location>
</feature>
<feature type="transmembrane region" description="Beta stranded" evidence="13 15">
    <location>
        <begin position="1260"/>
        <end position="1267"/>
    </location>
</feature>
<feature type="topological domain" description="Extracellular" evidence="13 15">
    <location>
        <begin position="1268"/>
        <end position="1275"/>
    </location>
</feature>
<feature type="transmembrane region" description="Beta stranded" evidence="13 15">
    <location>
        <begin position="1276"/>
        <end position="1284"/>
    </location>
</feature>
<feature type="topological domain" description="Periplasmic" evidence="13 15">
    <location>
        <begin position="1285"/>
        <end position="1286"/>
    </location>
</feature>
<feature type="domain" description="Autotransporter" evidence="1">
    <location>
        <begin position="998"/>
        <end position="1286"/>
    </location>
</feature>
<feature type="site" description="Cleavage; by autolysis" evidence="6 8">
    <location>
        <begin position="846"/>
        <end position="847"/>
    </location>
</feature>
<feature type="glycosylation site" description="O-alpha-linked (glycero-D-manno-heptose) serine" evidence="12">
    <location>
        <position position="102"/>
    </location>
</feature>
<feature type="glycosylation site" description="O-alpha-linked (glycero-D-manno-heptose) serine" evidence="12">
    <location>
        <position position="111"/>
    </location>
</feature>
<feature type="glycosylation site" description="O-alpha-linked (glycero-D-manno-heptose) serine" evidence="12">
    <location>
        <position position="116"/>
    </location>
</feature>
<feature type="glycosylation site" description="O-alpha-linked (glycero-D-manno-heptose) threonine" evidence="12">
    <location>
        <position position="154"/>
    </location>
</feature>
<feature type="glycosylation site" description="O-alpha-linked (glycero-D-manno-heptose) serine" evidence="12">
    <location>
        <position position="242"/>
    </location>
</feature>
<feature type="glycosylation site" description="O-alpha-linked (glycero-D-manno-heptose) serine" evidence="12">
    <location>
        <position position="252"/>
    </location>
</feature>
<feature type="glycosylation site" description="O-alpha-linked (glycero-D-manno-heptose) serine" evidence="12">
    <location>
        <position position="334"/>
    </location>
</feature>
<feature type="glycosylation site" description="O-alpha-linked (glycero-D-manno-heptose) serine" evidence="12">
    <location>
        <position position="391"/>
    </location>
</feature>
<feature type="glycosylation site" description="O-alpha-linked (glycero-D-manno-heptose) serine" evidence="12">
    <location>
        <position position="409"/>
    </location>
</feature>
<feature type="glycosylation site" description="O-alpha-linked (glycero-D-manno-heptose) serine" evidence="12 14">
    <location>
        <position position="539"/>
    </location>
</feature>
<feature type="glycosylation site" description="O-alpha-linked (glycero-D-manno-heptose) serine" evidence="12 14">
    <location>
        <position position="545"/>
    </location>
</feature>
<feature type="glycosylation site" description="O-alpha-linked (glycero-D-manno-heptose) serine" evidence="12 14">
    <location>
        <position position="558"/>
    </location>
</feature>
<feature type="glycosylation site" description="O-alpha-linked (glycero-D-manno-heptose) serine" evidence="12 14">
    <location>
        <position position="569"/>
    </location>
</feature>
<feature type="glycosylation site" description="O-alpha-linked (glycero-D-manno-heptose) serine" evidence="12 14">
    <location>
        <position position="576"/>
    </location>
</feature>
<feature type="glycosylation site" description="O-alpha-linked (glycero-D-manno-heptose) serine" evidence="12 14">
    <location>
        <position position="577"/>
    </location>
</feature>
<feature type="glycosylation site" description="O-alpha-linked (glycero-D-manno-heptose) serine" evidence="12 14">
    <location>
        <position position="582"/>
    </location>
</feature>
<feature type="mutagenesis site" description="No effect on autocleavage." evidence="6">
    <location>
        <begin position="2"/>
        <end position="492"/>
    </location>
</feature>
<feature type="mutagenesis site" description="No effect on autocleavage." evidence="6">
    <location>
        <begin position="55"/>
        <end position="224"/>
    </location>
</feature>
<feature type="mutagenesis site" description="No effect on autocleavage." evidence="6">
    <location>
        <begin position="225"/>
        <end position="666"/>
    </location>
</feature>
<feature type="mutagenesis site" description="No effect on autocleavage." evidence="6">
    <original>D</original>
    <variation>A</variation>
    <location>
        <position position="712"/>
    </location>
</feature>
<feature type="mutagenesis site" description="No effect on autocleavage." evidence="6">
    <original>D</original>
    <variation>A</variation>
    <location>
        <position position="724"/>
    </location>
</feature>
<feature type="mutagenesis site" description="No effect on autocleavage." evidence="6">
    <original>D</original>
    <variation>A</variation>
    <location>
        <position position="772"/>
    </location>
</feature>
<feature type="mutagenesis site" description="No effect on autocleavage." evidence="6">
    <original>D</original>
    <variation>A</variation>
    <location>
        <position position="785"/>
    </location>
</feature>
<feature type="mutagenesis site" description="Slight reduction in autocleavage." evidence="6">
    <original>E</original>
    <variation>A</variation>
    <location>
        <position position="845"/>
    </location>
</feature>
<feature type="mutagenesis site" description="Slight reduction in autocleavage." evidence="6">
    <original>N</original>
    <variation>A</variation>
    <location>
        <position position="849"/>
    </location>
</feature>
<feature type="mutagenesis site" description="No effect on autocleavage." evidence="6">
    <original>E</original>
    <variation>A</variation>
    <location>
        <position position="871"/>
    </location>
</feature>
<feature type="mutagenesis site" description="No effect on autocleavage." evidence="6">
    <original>D</original>
    <variation>A</variation>
    <location>
        <position position="873"/>
    </location>
</feature>
<feature type="mutagenesis site" description="No effect on autocleavage." evidence="6">
    <original>N</original>
    <variation>A</variation>
    <location>
        <position position="874"/>
    </location>
</feature>
<feature type="mutagenesis site" description="Abolishes autocleavage. No effect on subcellular location." evidence="6">
    <original>D</original>
    <variation>A</variation>
    <variation>N</variation>
    <location>
        <position position="878"/>
    </location>
</feature>
<feature type="mutagenesis site" description="No effect on autocleavage." evidence="6">
    <original>D</original>
    <variation>E</variation>
    <location>
        <position position="878"/>
    </location>
</feature>
<feature type="mutagenesis site" description="No effect on autocleavage." evidence="6">
    <original>R</original>
    <variation>A</variation>
    <location>
        <position position="879"/>
    </location>
</feature>
<feature type="mutagenesis site" description="No effect on autocleavage." evidence="6">
    <original>D</original>
    <variation>A</variation>
    <location>
        <position position="906"/>
    </location>
</feature>
<feature type="mutagenesis site" description="No effect on autocleavage." evidence="6">
    <original>D</original>
    <variation>A</variation>
    <location>
        <position position="933"/>
    </location>
</feature>
<feature type="mutagenesis site" description="No effect on autocleavage." evidence="6">
    <location>
        <begin position="954"/>
        <end position="1286"/>
    </location>
</feature>
<feature type="sequence conflict" description="In Ref. 2; AA sequence." evidence="11" ref="2">
    <original>I</original>
    <variation>V</variation>
    <location>
        <position position="115"/>
    </location>
</feature>
<feature type="sequence conflict" description="In Ref. 2; AA sequence." evidence="11" ref="2">
    <original>I</original>
    <variation>L</variation>
    <location>
        <position position="339"/>
    </location>
</feature>
<feature type="sequence conflict" description="In Ref. 2; AA sequence." evidence="11" ref="2">
    <original>Y</original>
    <variation>S</variation>
    <location>
        <position position="348"/>
    </location>
</feature>
<feature type="sequence conflict" description="In Ref. 2; AA sequence." evidence="11" ref="2">
    <original>I</original>
    <variation>L</variation>
    <location>
        <position position="351"/>
    </location>
</feature>
<feature type="sequence conflict" description="In Ref. 2; AA sequence." evidence="11" ref="2">
    <original>R</original>
    <variation>B</variation>
    <location>
        <position position="388"/>
    </location>
</feature>
<feature type="sequence conflict" description="In Ref. 2; AA sequence." evidence="11" ref="2">
    <original>RG</original>
    <variation>BE</variation>
    <location>
        <begin position="396"/>
        <end position="397"/>
    </location>
</feature>
<feature type="sequence conflict" description="In Ref. 2; AA sequence." evidence="11" ref="2">
    <original>I</original>
    <variation>L</variation>
    <location>
        <position position="399"/>
    </location>
</feature>
<feature type="sequence conflict" description="In Ref. 2; AA sequence." evidence="11" ref="2">
    <original>N</original>
    <variation>D</variation>
    <location>
        <position position="410"/>
    </location>
</feature>
<feature type="sequence conflict" description="In Ref. 2; AA sequence." evidence="11" ref="2">
    <original>I</original>
    <variation>L</variation>
    <location>
        <position position="528"/>
    </location>
</feature>
<feature type="sequence conflict" description="In Ref. 2; AA sequence." evidence="11" ref="2">
    <original>R</original>
    <variation>M</variation>
    <location>
        <position position="683"/>
    </location>
</feature>
<feature type="sequence conflict" description="In Ref. 2; AA sequence." evidence="11" ref="2">
    <original>IN</original>
    <variation>VD</variation>
    <location>
        <begin position="692"/>
        <end position="693"/>
    </location>
</feature>
<feature type="sequence conflict" description="In Ref. 2; AA sequence." evidence="11" ref="2">
    <original>T</original>
    <variation>S</variation>
    <location>
        <position position="695"/>
    </location>
</feature>
<feature type="sequence conflict" description="In Ref. 2; AA sequence." evidence="11" ref="2">
    <original>I</original>
    <variation>L</variation>
    <location>
        <position position="698"/>
    </location>
</feature>
<feature type="sequence conflict" description="In Ref. 2; AA sequence." evidence="11" ref="2">
    <original>N</original>
    <variation>D</variation>
    <location>
        <position position="829"/>
    </location>
</feature>
<feature type="sequence conflict" description="In Ref. 2; AA sequence." evidence="11" ref="2">
    <original>TL</original>
    <variation>VV</variation>
    <location>
        <begin position="850"/>
        <end position="851"/>
    </location>
</feature>
<feature type="sequence conflict" description="In Ref. 2; AA sequence." evidence="11" ref="2">
    <original>S</original>
    <variation>V</variation>
    <location>
        <position position="854"/>
    </location>
</feature>
<feature type="helix" evidence="16">
    <location>
        <begin position="966"/>
        <end position="979"/>
    </location>
</feature>
<feature type="strand" evidence="16">
    <location>
        <begin position="1005"/>
        <end position="1017"/>
    </location>
</feature>
<feature type="strand" evidence="16">
    <location>
        <begin position="1021"/>
        <end position="1039"/>
    </location>
</feature>
<feature type="turn" evidence="16">
    <location>
        <begin position="1044"/>
        <end position="1046"/>
    </location>
</feature>
<feature type="strand" evidence="16">
    <location>
        <begin position="1047"/>
        <end position="1066"/>
    </location>
</feature>
<feature type="turn" evidence="16">
    <location>
        <begin position="1067"/>
        <end position="1069"/>
    </location>
</feature>
<feature type="strand" evidence="16">
    <location>
        <begin position="1072"/>
        <end position="1091"/>
    </location>
</feature>
<feature type="strand" evidence="16">
    <location>
        <begin position="1095"/>
        <end position="1115"/>
    </location>
</feature>
<feature type="strand" evidence="16">
    <location>
        <begin position="1120"/>
        <end position="1144"/>
    </location>
</feature>
<feature type="strand" evidence="16">
    <location>
        <begin position="1150"/>
        <end position="1168"/>
    </location>
</feature>
<feature type="strand" evidence="16">
    <location>
        <begin position="1178"/>
        <end position="1182"/>
    </location>
</feature>
<feature type="strand" evidence="16">
    <location>
        <begin position="1187"/>
        <end position="1200"/>
    </location>
</feature>
<feature type="strand" evidence="16">
    <location>
        <begin position="1214"/>
        <end position="1224"/>
    </location>
</feature>
<feature type="strand" evidence="16">
    <location>
        <begin position="1227"/>
        <end position="1230"/>
    </location>
</feature>
<feature type="strand" evidence="16">
    <location>
        <begin position="1235"/>
        <end position="1237"/>
    </location>
</feature>
<feature type="strand" evidence="16">
    <location>
        <begin position="1241"/>
        <end position="1253"/>
    </location>
</feature>
<feature type="strand" evidence="16">
    <location>
        <begin position="1255"/>
        <end position="1268"/>
    </location>
</feature>
<feature type="strand" evidence="16">
    <location>
        <begin position="1274"/>
        <end position="1284"/>
    </location>
</feature>
<reference key="1">
    <citation type="journal article" date="1992" name="Mol. Microbiol.">
        <title>AIDA-I, the adhesin involved in diffuse adherence of the diarrhoeagenic Escherichia coli strain 2787 (O126:H27), is synthesized via a precursor molecule.</title>
        <authorList>
            <person name="Benz I."/>
            <person name="Schmidt M.A."/>
        </authorList>
    </citation>
    <scope>NUCLEOTIDE SEQUENCE [GENOMIC DNA]</scope>
    <scope>PROTEIN SEQUENCE OF 50-56</scope>
    <scope>PROTEOLYTIC CLEAVAGE</scope>
    <source>
        <strain>O126:H27 / 2787 / DAEC</strain>
    </source>
</reference>
<reference key="2">
    <citation type="journal article" date="2005" name="Vet. Microbiol.">
        <title>Characterization and immuno-detection of AIDA-I adhesin isolated from porcine Escherichia coli.</title>
        <authorList>
            <person name="Fang Y."/>
            <person name="Ngeleka M."/>
            <person name="Middleton D.M."/>
            <person name="Simko E."/>
        </authorList>
    </citation>
    <scope>PROTEIN SEQUENCE OF 112-117; 338-352; 388-393; 396-405; 408-414; 473-480; 520-530; 679-685; 691-698; 797-804; 822-836 AND 847-855</scope>
    <source>
        <strain>PD20</strain>
        <strain>PD58</strain>
    </source>
</reference>
<reference key="3">
    <citation type="journal article" date="1996" name="Mol. Microbiol.">
        <title>Processing of the AIDA-I precursor: removal of AIDAc and evidence for the outer membrane anchoring as a beta-barrel structure.</title>
        <authorList>
            <person name="Suhr M."/>
            <person name="Benz I."/>
            <person name="Schmidt M.A."/>
        </authorList>
    </citation>
    <scope>PROTEIN SEQUENCE OF 847-856; 927-934 AND 948-964</scope>
    <scope>SUBCELLULAR LOCATION</scope>
    <scope>PROTEOLYTIC CLEAVAGE</scope>
    <source>
        <strain>O126:H27 / 2787 / DAEC</strain>
    </source>
</reference>
<reference key="4">
    <citation type="journal article" date="1999" name="J. Bacteriol.">
        <title>Characterization of the essential transport function of the AIDA-I autotransporter and evidence supporting structural predictions.</title>
        <authorList>
            <person name="Maurer J."/>
            <person name="Jose J."/>
            <person name="Meyer T.F."/>
        </authorList>
    </citation>
    <scope>TOPOLOGY OF THE TRANSLOCATOR DOMAIN</scope>
</reference>
<reference key="5">
    <citation type="journal article" date="2004" name="J. Bacteriol.">
        <title>Novel roles for the AIDA adhesin from diarrheagenic Escherichia coli: cell aggregation and biofilm formation.</title>
        <authorList>
            <person name="Sherlock O."/>
            <person name="Schembri M.A."/>
            <person name="Reisner A."/>
            <person name="Klemm P."/>
        </authorList>
    </citation>
    <scope>FUNCTION</scope>
    <scope>GLYCOSYLATION</scope>
</reference>
<reference key="6">
    <citation type="journal article" date="2006" name="J. Bacteriol.">
        <title>Polar localization of the autotransporter family of large bacterial virulence proteins.</title>
        <authorList>
            <person name="Jain S."/>
            <person name="van Ulsen P."/>
            <person name="Benz I."/>
            <person name="Schmidt M.A."/>
            <person name="Fernandez R."/>
            <person name="Tommassen J."/>
            <person name="Goldberg M.B."/>
        </authorList>
    </citation>
    <scope>SUBCELLULAR LOCATION</scope>
    <scope>POLAR TARGETING</scope>
    <source>
        <strain>2443 / DAEC</strain>
    </source>
</reference>
<reference key="7">
    <citation type="journal article" date="2007" name="J. Bacteriol.">
        <title>O-linked glycosylation ensures the normal conformation of the autotransporter adhesin involved in diffuse adherence.</title>
        <authorList>
            <person name="Charbonneau M.E."/>
            <person name="Girard V."/>
            <person name="Nikolakakis A."/>
            <person name="Campos M."/>
            <person name="Berthiaume F."/>
            <person name="Dumas F."/>
            <person name="Lepine F."/>
            <person name="Mourez M."/>
        </authorList>
    </citation>
    <scope>FUNCTION</scope>
    <scope>PROTEOLYTIC CLEAVAGE</scope>
    <scope>GLYCOSYLATION AT SER-102; SER-111; SER-116; THR-154; SER-242; SER-252; SER-334; SER-391; SER-409; SER-539; SER-545; SER-558; SER-569; SER-576; SER-577 AND SER-582</scope>
</reference>
<reference key="8">
    <citation type="journal article" date="2009" name="J. Biol. Chem.">
        <title>Autoprocessing of the Escherichia coli AIDA-I autotransporter: a new mechanism involving acidic residues in the junction region.</title>
        <authorList>
            <person name="Charbonneau M.E."/>
            <person name="Janvore J."/>
            <person name="Mourez M."/>
        </authorList>
    </citation>
    <scope>SUBCELLULAR LOCATION</scope>
    <scope>PROTEOLYTIC CLEAVAGE</scope>
    <scope>MUTAGENESIS OF 2-ASN--SER-492; 55-THR--GLY-224; 225-ALA--ARG-666; ASP-712; ASP-724; ASP-772; ASP-785; GLU-845; ASN-849; GLU-871; ASP-873; ASN-874; ASP-878; ARG-879; ASP-906; ASP-933 AND 954-HIS--PHE-1286</scope>
</reference>
<reference key="9">
    <citation type="journal article" date="2014" name="Cell Host Microbe">
        <title>An iron-containing dodecameric heptosyltransferase family modifies bacterial autotransporters in pathogenesis.</title>
        <authorList>
            <person name="Lu Q."/>
            <person name="Yao Q."/>
            <person name="Xu Y."/>
            <person name="Li L."/>
            <person name="Li S."/>
            <person name="Liu Y."/>
            <person name="Gao W."/>
            <person name="Niu M."/>
            <person name="Sharon M."/>
            <person name="Ben-Nissan G."/>
            <person name="Zamyatina A."/>
            <person name="Liu X."/>
            <person name="Chen S."/>
            <person name="Shao F."/>
        </authorList>
    </citation>
    <scope>FUNCTION</scope>
    <scope>SUBCELLULAR LOCATION</scope>
    <scope>DISRUPTION PHENOTYPE</scope>
    <scope>GLYCOSYLATION AT SER-539; SER-545; SER-558; SER-569; SER-576; SER-577 AND SER-582</scope>
</reference>
<reference evidence="15" key="10">
    <citation type="journal article" date="2014" name="J. Struct. Biol.">
        <title>Crystal structure of the transport unit of the autotransporter adhesin involved in diffuse adherence from Escherichia coli.</title>
        <authorList>
            <person name="Gawarzewski I."/>
            <person name="DiMaio F."/>
            <person name="Winterer E."/>
            <person name="Tschapek B."/>
            <person name="Smits S.H.J."/>
            <person name="Jose J."/>
            <person name="Schmitt L."/>
        </authorList>
    </citation>
    <scope>X-RAY CRYSTALLOGRAPHY (3.00 ANGSTROMS) OF 840-1286</scope>
    <scope>TOPOLOGY</scope>
</reference>
<proteinExistence type="evidence at protein level"/>
<dbReference type="EMBL" id="X65022">
    <property type="protein sequence ID" value="CAA46156.1"/>
    <property type="molecule type" value="Genomic_DNA"/>
</dbReference>
<dbReference type="PIR" id="S28634">
    <property type="entry name" value="S28634"/>
</dbReference>
<dbReference type="PDB" id="4MEE">
    <property type="method" value="X-ray"/>
    <property type="resolution" value="3.00 A"/>
    <property type="chains" value="A=840-1286"/>
</dbReference>
<dbReference type="PDBsum" id="4MEE"/>
<dbReference type="SMR" id="Q03155"/>
<dbReference type="MEROPS" id="U69.001"/>
<dbReference type="TCDB" id="1.B.12.1.1">
    <property type="family name" value="the autotransporter-1 (at-1) family"/>
</dbReference>
<dbReference type="iPTMnet" id="Q03155"/>
<dbReference type="EvolutionaryTrace" id="Q03155"/>
<dbReference type="GO" id="GO:0009279">
    <property type="term" value="C:cell outer membrane"/>
    <property type="evidence" value="ECO:0007669"/>
    <property type="project" value="UniProtKB-SubCell"/>
</dbReference>
<dbReference type="GO" id="GO:0009986">
    <property type="term" value="C:cell surface"/>
    <property type="evidence" value="ECO:0007669"/>
    <property type="project" value="UniProtKB-SubCell"/>
</dbReference>
<dbReference type="GO" id="GO:0005576">
    <property type="term" value="C:extracellular region"/>
    <property type="evidence" value="ECO:0007669"/>
    <property type="project" value="UniProtKB-SubCell"/>
</dbReference>
<dbReference type="GO" id="GO:0042597">
    <property type="term" value="C:periplasmic space"/>
    <property type="evidence" value="ECO:0007669"/>
    <property type="project" value="UniProtKB-SubCell"/>
</dbReference>
<dbReference type="GO" id="GO:0007155">
    <property type="term" value="P:cell adhesion"/>
    <property type="evidence" value="ECO:0007669"/>
    <property type="project" value="UniProtKB-KW"/>
</dbReference>
<dbReference type="CDD" id="cd01344">
    <property type="entry name" value="PL2_Passenger_AT"/>
    <property type="match status" value="1"/>
</dbReference>
<dbReference type="Gene3D" id="2.160.20.20">
    <property type="match status" value="3"/>
</dbReference>
<dbReference type="Gene3D" id="2.40.128.130">
    <property type="entry name" value="Autotransporter beta-domain"/>
    <property type="match status" value="1"/>
</dbReference>
<dbReference type="InterPro" id="IPR043990">
    <property type="entry name" value="AC_1"/>
</dbReference>
<dbReference type="InterPro" id="IPR030930">
    <property type="entry name" value="AIDA"/>
</dbReference>
<dbReference type="InterPro" id="IPR005546">
    <property type="entry name" value="Autotransporte_beta"/>
</dbReference>
<dbReference type="InterPro" id="IPR036709">
    <property type="entry name" value="Autotransporte_beta_dom_sf"/>
</dbReference>
<dbReference type="InterPro" id="IPR053678">
    <property type="entry name" value="Autotransporter_Adhesin"/>
</dbReference>
<dbReference type="InterPro" id="IPR012332">
    <property type="entry name" value="Autotransporter_pectin_lyase_C"/>
</dbReference>
<dbReference type="InterPro" id="IPR050909">
    <property type="entry name" value="Bact_Autotransporter_VF"/>
</dbReference>
<dbReference type="InterPro" id="IPR024973">
    <property type="entry name" value="ESPR"/>
</dbReference>
<dbReference type="InterPro" id="IPR006315">
    <property type="entry name" value="OM_autotransptr_brl_dom"/>
</dbReference>
<dbReference type="InterPro" id="IPR011050">
    <property type="entry name" value="Pectin_lyase_fold/virulence"/>
</dbReference>
<dbReference type="NCBIfam" id="NF033176">
    <property type="entry name" value="auto_AIDA-I"/>
    <property type="match status" value="1"/>
</dbReference>
<dbReference type="NCBIfam" id="TIGR01414">
    <property type="entry name" value="autotrans_barl"/>
    <property type="match status" value="1"/>
</dbReference>
<dbReference type="NCBIfam" id="TIGR04415">
    <property type="entry name" value="O_hepto_targRPT"/>
    <property type="match status" value="13"/>
</dbReference>
<dbReference type="PANTHER" id="PTHR12338:SF5">
    <property type="entry name" value="ANTIGEN 43-RELATED"/>
    <property type="match status" value="1"/>
</dbReference>
<dbReference type="PANTHER" id="PTHR12338">
    <property type="entry name" value="AUTOTRANSPORTER"/>
    <property type="match status" value="1"/>
</dbReference>
<dbReference type="Pfam" id="PF18883">
    <property type="entry name" value="AC_1"/>
    <property type="match status" value="1"/>
</dbReference>
<dbReference type="Pfam" id="PF16168">
    <property type="entry name" value="AIDA"/>
    <property type="match status" value="3"/>
</dbReference>
<dbReference type="Pfam" id="PF13018">
    <property type="entry name" value="ESPR"/>
    <property type="match status" value="1"/>
</dbReference>
<dbReference type="SMART" id="SM00869">
    <property type="entry name" value="Autotransporter"/>
    <property type="match status" value="1"/>
</dbReference>
<dbReference type="SUPFAM" id="SSF103515">
    <property type="entry name" value="Autotransporter"/>
    <property type="match status" value="1"/>
</dbReference>
<dbReference type="SUPFAM" id="SSF51126">
    <property type="entry name" value="Pectin lyase-like"/>
    <property type="match status" value="2"/>
</dbReference>
<dbReference type="PROSITE" id="PS51208">
    <property type="entry name" value="AUTOTRANSPORTER"/>
    <property type="match status" value="1"/>
</dbReference>
<sequence>MNKAYSIIWSHSRQAWIVASELARGHGFVLAKNTLLVLAVVSTIGNAFAVNISGTVSSGGTVSSGETQIVYSGRGNSNATVNSGGTQIVNNGGKTTATTVNSSGSQNVGTSGATISTIVNSGGIQRVSSGGVASATNLSGGAQNIYNLGHASNTVIFSGGNQTIFSGGITDSTNISSGGQQRVSSGGVASNTTINSSGAQNILSEEGAISTHISSGGNQYISAGANATETIVNSGGFQRVNSGAVATGTVLSGGTQNVSSGGSAISTSVYNSGVQTVFAGATVTDTTVNSGGNQNISSGGIVSETTVNVSGTQNIYSGGSALSANIKGSQIVNSEGTAINTLVSDGGYQHIRNGGIASGTIVNQSGYVNISSGGYAESTIINSGGTLRVLSDGYARGTILNNSGRENVSNGGVSYNAMINTGGNQYIYSDGEATAAIVNTSGFQRINSGGTAPVQNSVVVTRTVSSAAKPFDAEVYSGGKQTVYLWRGIWYSNFLTAVWSMFPGTASGANVNLSGRLNAFAGNVVGTILNQEGRQYVYSGATATSTVGNNEGREYVLSGGITDGTVLNSGGLQAVSSGGKASATVINEGGAQFVYDGGQVTGTNIKNGGTIRVDSGASALNIALSSGGNLFTSTGATLPELTTMAALSVSQNHASNIVLENGGLLRVTSGGTATDTTVNSAGRLRIDDGGTINGTTTINADGIVAGTNIQNDGNFILNLAENYDFETELSGSGVLVKDNTGIMTYAGTLTQAQGVNVKNGGIIFDSAVVNADMAVNQNAYINISDQATINGSVNNNGSIVINNSIINGNITNDADLSFGTAKLLSATVNGSLVNNKNIILNPTKESAGNTLTVSNYTGTPGSVISLGGVLEGDNSLTDRLVVKGNTSGQSDIVYVNEDGSGGQTRDGINIISVEGNSDAEFSLKNRVVAGAYDYTLQKGNESGTDNKGWYLTSHLPTSDTRQYRPENGSYATNMALANSLFLMDLNERKQFRAMSDNTQPESASVWMKITGGISSGKLNDGQNKTTTNQFINQLGGDIYKFHAEQLGDFTLGIMGGYANAKGKTINYTSNKAARNTLDGYSVGVYGTWYQNGENATGLFAETWMQYNWFNASVKGDGLEEEKYNLNGLTASAGGGYNLNVHTWTSPEGITGEFWLQPHLQAVWMGVTPDTHQEDNGTVVQGAGKNNIQTKAGIRASWKVKSTLDKDTGRRFRPYIEANWIHNTHEFGVKMSDDSQLLSGSRNQGEIKTGIEGVITQNLSVNGGVAYQAGGHGSNAISGALGIKYSF</sequence>
<accession>Q03155</accession>
<geneLocation type="plasmid">
    <name>pIB6</name>
</geneLocation>
<evidence type="ECO:0000255" key="1">
    <source>
        <dbReference type="PROSITE-ProRule" id="PRU00556"/>
    </source>
</evidence>
<evidence type="ECO:0000269" key="2">
    <source>
    </source>
</evidence>
<evidence type="ECO:0000269" key="3">
    <source>
    </source>
</evidence>
<evidence type="ECO:0000269" key="4">
    <source>
    </source>
</evidence>
<evidence type="ECO:0000269" key="5">
    <source>
    </source>
</evidence>
<evidence type="ECO:0000269" key="6">
    <source>
    </source>
</evidence>
<evidence type="ECO:0000269" key="7">
    <source>
    </source>
</evidence>
<evidence type="ECO:0000269" key="8">
    <source>
    </source>
</evidence>
<evidence type="ECO:0000303" key="9">
    <source>
    </source>
</evidence>
<evidence type="ECO:0000303" key="10">
    <source>
    </source>
</evidence>
<evidence type="ECO:0000305" key="11"/>
<evidence type="ECO:0000305" key="12">
    <source>
    </source>
</evidence>
<evidence type="ECO:0000305" key="13">
    <source>
    </source>
</evidence>
<evidence type="ECO:0000305" key="14">
    <source>
    </source>
</evidence>
<evidence type="ECO:0007744" key="15">
    <source>
        <dbReference type="PDB" id="4MEE"/>
    </source>
</evidence>
<evidence type="ECO:0007829" key="16">
    <source>
        <dbReference type="PDB" id="4MEE"/>
    </source>
</evidence>
<name>AIDA_ECOLX</name>
<organism>
    <name type="scientific">Escherichia coli</name>
    <dbReference type="NCBI Taxonomy" id="562"/>
    <lineage>
        <taxon>Bacteria</taxon>
        <taxon>Pseudomonadati</taxon>
        <taxon>Pseudomonadota</taxon>
        <taxon>Gammaproteobacteria</taxon>
        <taxon>Enterobacterales</taxon>
        <taxon>Enterobacteriaceae</taxon>
        <taxon>Escherichia</taxon>
    </lineage>
</organism>
<keyword id="KW-0002">3D-structure</keyword>
<keyword id="KW-0068">Autocatalytic cleavage</keyword>
<keyword id="KW-0130">Cell adhesion</keyword>
<keyword id="KW-0998">Cell outer membrane</keyword>
<keyword id="KW-0903">Direct protein sequencing</keyword>
<keyword id="KW-0325">Glycoprotein</keyword>
<keyword id="KW-0472">Membrane</keyword>
<keyword id="KW-0574">Periplasm</keyword>
<keyword id="KW-0614">Plasmid</keyword>
<keyword id="KW-0964">Secreted</keyword>
<keyword id="KW-0732">Signal</keyword>
<keyword id="KW-0812">Transmembrane</keyword>
<keyword id="KW-1134">Transmembrane beta strand</keyword>
<keyword id="KW-0843">Virulence</keyword>